<comment type="function">
    <text evidence="1">Caerin-1.19 shows significant activity against Gram-positive organisms, but is less effective against Gram-negative organisms.</text>
</comment>
<comment type="subcellular location">
    <subcellularLocation>
        <location>Secreted</location>
    </subcellularLocation>
</comment>
<comment type="tissue specificity">
    <text>Expressed by the skin dorsal glands.</text>
</comment>
<comment type="mass spectrometry">
    <molecule>Caerin-1.19</molecule>
</comment>
<comment type="mass spectrometry">
    <molecule>Caerin-1.19.1</molecule>
</comment>
<comment type="mass spectrometry">
    <molecule>Caerin-1.19.2</molecule>
</comment>
<comment type="mass spectrometry">
    <molecule>Caerin-1.19.3</molecule>
</comment>
<comment type="similarity">
    <text evidence="2">Belongs to the frog skin active peptide (FSAP) family. Caerin subfamily.</text>
</comment>
<evidence type="ECO:0000269" key="1">
    <source>
    </source>
</evidence>
<evidence type="ECO:0000305" key="2"/>
<reference key="1">
    <citation type="journal article" date="2006" name="Toxicon">
        <title>New caerin antibiotic peptides from the skin secretion of the dainty green tree frog Litoria gracilenta. Identification using positive and negative ion electrospray mass spectrometry.</title>
        <authorList>
            <person name="Maclean M.J."/>
            <person name="Brinkworth C.S."/>
            <person name="Bilusich D."/>
            <person name="Bowie J.H."/>
            <person name="Doyle J.R."/>
            <person name="Llewellyn L.E."/>
            <person name="Tyler M.J."/>
        </authorList>
    </citation>
    <scope>PROTEIN SEQUENCE</scope>
    <scope>AMIDATION AT LEU-25</scope>
    <scope>FUNCTION</scope>
    <scope>MASS SPECTROMETRY</scope>
    <scope>SYNTHESIS OF 1-25</scope>
    <source>
        <tissue>Skin secretion</tissue>
    </source>
</reference>
<organism>
    <name type="scientific">Ranoidea gracilenta</name>
    <name type="common">Dainty green tree frog</name>
    <name type="synonym">Litoria gracilenta</name>
    <dbReference type="NCBI Taxonomy" id="95133"/>
    <lineage>
        <taxon>Eukaryota</taxon>
        <taxon>Metazoa</taxon>
        <taxon>Chordata</taxon>
        <taxon>Craniata</taxon>
        <taxon>Vertebrata</taxon>
        <taxon>Euteleostomi</taxon>
        <taxon>Amphibia</taxon>
        <taxon>Batrachia</taxon>
        <taxon>Anura</taxon>
        <taxon>Neobatrachia</taxon>
        <taxon>Hyloidea</taxon>
        <taxon>Hylidae</taxon>
        <taxon>Pelodryadinae</taxon>
        <taxon>Ranoidea</taxon>
    </lineage>
</organism>
<dbReference type="SMR" id="P0C2A8"/>
<dbReference type="GO" id="GO:0005576">
    <property type="term" value="C:extracellular region"/>
    <property type="evidence" value="ECO:0007669"/>
    <property type="project" value="UniProtKB-SubCell"/>
</dbReference>
<dbReference type="GO" id="GO:0042742">
    <property type="term" value="P:defense response to bacterium"/>
    <property type="evidence" value="ECO:0007669"/>
    <property type="project" value="UniProtKB-KW"/>
</dbReference>
<dbReference type="InterPro" id="IPR010000">
    <property type="entry name" value="Caerin_1"/>
</dbReference>
<dbReference type="Pfam" id="PF07440">
    <property type="entry name" value="Caerin_1"/>
    <property type="match status" value="1"/>
</dbReference>
<sequence>GLFKVLGSVAKHLLPHVAPIIAEKL</sequence>
<proteinExistence type="evidence at protein level"/>
<name>CR119_RANGR</name>
<accession>P0C2A8</accession>
<protein>
    <recommendedName>
        <fullName>Caerin-1.19</fullName>
    </recommendedName>
    <component>
        <recommendedName>
            <fullName>Caerin-1.19.1</fullName>
        </recommendedName>
    </component>
    <component>
        <recommendedName>
            <fullName>Caerin-1.19.2</fullName>
        </recommendedName>
    </component>
    <component>
        <recommendedName>
            <fullName>Caerin-1.19.3</fullName>
        </recommendedName>
    </component>
</protein>
<feature type="peptide" id="PRO_0000271470" description="Caerin-1.19">
    <location>
        <begin position="1"/>
        <end position="25"/>
    </location>
</feature>
<feature type="peptide" id="PRO_0000271471" description="Caerin-1.19.1">
    <location>
        <begin position="3"/>
        <end position="25"/>
    </location>
</feature>
<feature type="peptide" id="PRO_0000271472" description="Caerin-1.19.2">
    <location>
        <begin position="4"/>
        <end position="25"/>
    </location>
</feature>
<feature type="peptide" id="PRO_0000271473" description="Caerin-1.19.3">
    <location>
        <begin position="7"/>
        <end position="25"/>
    </location>
</feature>
<feature type="modified residue" description="Leucine amide" evidence="1">
    <location>
        <position position="25"/>
    </location>
</feature>
<keyword id="KW-0027">Amidation</keyword>
<keyword id="KW-0878">Amphibian defense peptide</keyword>
<keyword id="KW-0044">Antibiotic</keyword>
<keyword id="KW-0929">Antimicrobial</keyword>
<keyword id="KW-0903">Direct protein sequencing</keyword>
<keyword id="KW-0964">Secreted</keyword>